<sequence>MMEILRGSPALSAFRINKLLARFQAARLLVHTIYAEYVHFADLNAPLNDDEHAQLERLLKYGPALASHAPQGKLLLVTPRPGTISPWSSKATDIAHNCGLQQVNRLERGVAYYIEAGTLTNEQWQQVTAELHDRMMETVFFALDDAEQLFAHHQPTPVTSVDLLGQGRQALIDANLRLGLALAEDEIDYLQDAFTRLGRNPNDIELYMFAQANSEHCRHKIFNADWVIDGEQQPKSLFKMIKNTFETTPDHVLSAYKDNAAVMEGSEVGRYFADHETGRYDFHQEPAHILMKVETHNHPTAISPWPGAATGSGGEIRDEGATGRGAKPKAGLVGFSVSNLRIPGFEQPWEEDFGKPERIVTALDIMTEGPLGGAAFNNEFGRPALNGYFRTYEEKVNSHNGEELRGYHKPIMLAGGIGNIRADHVQKGEINVGAKLVVLGGPAMNIGLGGGAASSMASGQSDADLDFASVQRDNPEMERRCQEVIDRCWQLGDANPILFIHDVGAGGLSNAMPELVSDGGRGGKFELRDILSDEPGMSPLEIWCNESQERYVLAVAADQLPLFDELCKRERAPYAVIGEATEELHLSLHDRHFDNQPIDLPLDVLLGKTPKMTRDVQTLKAKGDALAREGITIADAVKRVLHLPTVAEKTFLVTIGDRSVTGMVARDQMVGPWQVPVANCAVTTASLDSYYGEAMAIGERAPVALLDFAASARLAVGEALTNIAATQIGDIKRIKLSANWMAAAGHPGEDAGLYEAVKAVGEELCPALGLTIPVGKDSMSMKTRWQEGNEEREMTSPLSLVISAFARVEDVRHTITPQLSTEDNALLLIDLGKGNNALGATALAQVYRQLGDKPADVRDVAQLKGFYDAIQALVAQRKLLAYHDRSDGGLLVTLAEMAFAGHCGIDADIATLGDDRLAALFNEELGAVIQVRAADREAVEAVLAQHGLADCVHYVGQAVSGDRFVITANGQTVFSESRTTLRVWWAETTWQMQRLRDNPECADQEHQAKSNDADPGLNVKLSFDINEDVAAPFIATGARPKVAVLREQGVNSHVEMAAAFHRAGFDAIDVHMSDLLAGRTGLEGFHVLVACGGFSYGDVLGAGEGWAKSILFNDRVRDEFATFFHRPQTLALGVCNGCQMMSNLRELIPGSELWPRFVRNTSDRFEARFSLVEVTQSPSLLLQGMVGSQMPIAVSHGEGRVEVRDAAHLAALESKGLVALRYVDNFGKVTETYPANPNGSPNGITAVTTESGRVTIMMPHPERVFRTVSNSWHPENWGEDGPWMRIFRNARKQLG</sequence>
<gene>
    <name evidence="1" type="primary">purL</name>
    <name type="ordered locus">UTI89_C2877</name>
</gene>
<proteinExistence type="inferred from homology"/>
<name>PUR4_ECOUT</name>
<feature type="chain" id="PRO_0000264573" description="Phosphoribosylformylglycinamidine synthase">
    <location>
        <begin position="1"/>
        <end position="1295"/>
    </location>
</feature>
<feature type="domain" description="Glutamine amidotransferase type-1" evidence="1">
    <location>
        <begin position="1042"/>
        <end position="1295"/>
    </location>
</feature>
<feature type="region of interest" description="Disordered" evidence="2">
    <location>
        <begin position="305"/>
        <end position="327"/>
    </location>
</feature>
<feature type="active site" description="Nucleophile" evidence="1">
    <location>
        <position position="1135"/>
    </location>
</feature>
<feature type="active site" evidence="1">
    <location>
        <position position="1260"/>
    </location>
</feature>
<feature type="active site" evidence="1">
    <location>
        <position position="1262"/>
    </location>
</feature>
<feature type="binding site" evidence="1">
    <location>
        <begin position="307"/>
        <end position="318"/>
    </location>
    <ligand>
        <name>ATP</name>
        <dbReference type="ChEBI" id="CHEBI:30616"/>
    </ligand>
</feature>
<feature type="binding site" evidence="1">
    <location>
        <position position="678"/>
    </location>
    <ligand>
        <name>ATP</name>
        <dbReference type="ChEBI" id="CHEBI:30616"/>
    </ligand>
</feature>
<feature type="binding site" evidence="1">
    <location>
        <position position="718"/>
    </location>
    <ligand>
        <name>Mg(2+)</name>
        <dbReference type="ChEBI" id="CHEBI:18420"/>
    </ligand>
</feature>
<feature type="binding site" evidence="1">
    <location>
        <position position="722"/>
    </location>
    <ligand>
        <name>Mg(2+)</name>
        <dbReference type="ChEBI" id="CHEBI:18420"/>
    </ligand>
</feature>
<feature type="binding site" evidence="1">
    <location>
        <position position="884"/>
    </location>
    <ligand>
        <name>Mg(2+)</name>
        <dbReference type="ChEBI" id="CHEBI:18420"/>
    </ligand>
</feature>
<feature type="binding site" evidence="1">
    <location>
        <position position="886"/>
    </location>
    <ligand>
        <name>ATP</name>
        <dbReference type="ChEBI" id="CHEBI:30616"/>
    </ligand>
</feature>
<keyword id="KW-0067">ATP-binding</keyword>
<keyword id="KW-0963">Cytoplasm</keyword>
<keyword id="KW-0315">Glutamine amidotransferase</keyword>
<keyword id="KW-0436">Ligase</keyword>
<keyword id="KW-0460">Magnesium</keyword>
<keyword id="KW-0479">Metal-binding</keyword>
<keyword id="KW-0547">Nucleotide-binding</keyword>
<keyword id="KW-0658">Purine biosynthesis</keyword>
<protein>
    <recommendedName>
        <fullName evidence="1">Phosphoribosylformylglycinamidine synthase</fullName>
        <shortName evidence="1">FGAM synthase</shortName>
        <shortName evidence="1">FGAMS</shortName>
        <ecNumber evidence="1">6.3.5.3</ecNumber>
    </recommendedName>
    <alternativeName>
        <fullName evidence="1">Formylglycinamide ribonucleotide amidotransferase</fullName>
        <shortName evidence="1">FGAR amidotransferase</shortName>
        <shortName evidence="1">FGAR-AT</shortName>
    </alternativeName>
</protein>
<evidence type="ECO:0000255" key="1">
    <source>
        <dbReference type="HAMAP-Rule" id="MF_00419"/>
    </source>
</evidence>
<evidence type="ECO:0000256" key="2">
    <source>
        <dbReference type="SAM" id="MobiDB-lite"/>
    </source>
</evidence>
<evidence type="ECO:0000305" key="3"/>
<reference key="1">
    <citation type="journal article" date="2006" name="Proc. Natl. Acad. Sci. U.S.A.">
        <title>Identification of genes subject to positive selection in uropathogenic strains of Escherichia coli: a comparative genomics approach.</title>
        <authorList>
            <person name="Chen S.L."/>
            <person name="Hung C.-S."/>
            <person name="Xu J."/>
            <person name="Reigstad C.S."/>
            <person name="Magrini V."/>
            <person name="Sabo A."/>
            <person name="Blasiar D."/>
            <person name="Bieri T."/>
            <person name="Meyer R.R."/>
            <person name="Ozersky P."/>
            <person name="Armstrong J.R."/>
            <person name="Fulton R.S."/>
            <person name="Latreille J.P."/>
            <person name="Spieth J."/>
            <person name="Hooton T.M."/>
            <person name="Mardis E.R."/>
            <person name="Hultgren S.J."/>
            <person name="Gordon J.I."/>
        </authorList>
    </citation>
    <scope>NUCLEOTIDE SEQUENCE [LARGE SCALE GENOMIC DNA]</scope>
    <source>
        <strain>UTI89 / UPEC</strain>
    </source>
</reference>
<accession>Q1R8H7</accession>
<dbReference type="EC" id="6.3.5.3" evidence="1"/>
<dbReference type="EMBL" id="CP000243">
    <property type="protein sequence ID" value="ABE08337.1"/>
    <property type="status" value="ALT_INIT"/>
    <property type="molecule type" value="Genomic_DNA"/>
</dbReference>
<dbReference type="RefSeq" id="WP_000970064.1">
    <property type="nucleotide sequence ID" value="NZ_CP064825.1"/>
</dbReference>
<dbReference type="SMR" id="Q1R8H7"/>
<dbReference type="MEROPS" id="C56.972"/>
<dbReference type="KEGG" id="eci:UTI89_C2877"/>
<dbReference type="HOGENOM" id="CLU_001031_0_2_6"/>
<dbReference type="UniPathway" id="UPA00074">
    <property type="reaction ID" value="UER00128"/>
</dbReference>
<dbReference type="Proteomes" id="UP000001952">
    <property type="component" value="Chromosome"/>
</dbReference>
<dbReference type="GO" id="GO:0005737">
    <property type="term" value="C:cytoplasm"/>
    <property type="evidence" value="ECO:0007669"/>
    <property type="project" value="UniProtKB-SubCell"/>
</dbReference>
<dbReference type="GO" id="GO:0005524">
    <property type="term" value="F:ATP binding"/>
    <property type="evidence" value="ECO:0007669"/>
    <property type="project" value="UniProtKB-UniRule"/>
</dbReference>
<dbReference type="GO" id="GO:0046872">
    <property type="term" value="F:metal ion binding"/>
    <property type="evidence" value="ECO:0007669"/>
    <property type="project" value="UniProtKB-KW"/>
</dbReference>
<dbReference type="GO" id="GO:0004642">
    <property type="term" value="F:phosphoribosylformylglycinamidine synthase activity"/>
    <property type="evidence" value="ECO:0007669"/>
    <property type="project" value="UniProtKB-UniRule"/>
</dbReference>
<dbReference type="GO" id="GO:0006189">
    <property type="term" value="P:'de novo' IMP biosynthetic process"/>
    <property type="evidence" value="ECO:0007669"/>
    <property type="project" value="UniProtKB-UniRule"/>
</dbReference>
<dbReference type="CDD" id="cd01740">
    <property type="entry name" value="GATase1_FGAR_AT"/>
    <property type="match status" value="1"/>
</dbReference>
<dbReference type="CDD" id="cd02203">
    <property type="entry name" value="PurL_repeat1"/>
    <property type="match status" value="1"/>
</dbReference>
<dbReference type="FunFam" id="1.10.8.750:FF:000002">
    <property type="entry name" value="Phosphoribosylformylglycinamidine synthase"/>
    <property type="match status" value="1"/>
</dbReference>
<dbReference type="FunFam" id="3.30.1330.10:FF:000002">
    <property type="entry name" value="Phosphoribosylformylglycinamidine synthase"/>
    <property type="match status" value="1"/>
</dbReference>
<dbReference type="FunFam" id="3.30.1330.10:FF:000005">
    <property type="entry name" value="Phosphoribosylformylglycinamidine synthase"/>
    <property type="match status" value="1"/>
</dbReference>
<dbReference type="FunFam" id="3.40.50.880:FF:000008">
    <property type="entry name" value="Phosphoribosylformylglycinamidine synthase"/>
    <property type="match status" value="1"/>
</dbReference>
<dbReference type="FunFam" id="3.90.650.10:FF:000002">
    <property type="entry name" value="Phosphoribosylformylglycinamidine synthase"/>
    <property type="match status" value="1"/>
</dbReference>
<dbReference type="FunFam" id="3.90.650.10:FF:000005">
    <property type="entry name" value="Phosphoribosylformylglycinamidine synthase"/>
    <property type="match status" value="1"/>
</dbReference>
<dbReference type="Gene3D" id="3.40.50.880">
    <property type="match status" value="1"/>
</dbReference>
<dbReference type="Gene3D" id="1.10.8.750">
    <property type="entry name" value="Phosphoribosylformylglycinamidine synthase, linker domain"/>
    <property type="match status" value="1"/>
</dbReference>
<dbReference type="Gene3D" id="3.90.650.10">
    <property type="entry name" value="PurM-like C-terminal domain"/>
    <property type="match status" value="2"/>
</dbReference>
<dbReference type="Gene3D" id="3.30.1330.10">
    <property type="entry name" value="PurM-like, N-terminal domain"/>
    <property type="match status" value="2"/>
</dbReference>
<dbReference type="HAMAP" id="MF_00419">
    <property type="entry name" value="PurL_1"/>
    <property type="match status" value="1"/>
</dbReference>
<dbReference type="InterPro" id="IPR029062">
    <property type="entry name" value="Class_I_gatase-like"/>
</dbReference>
<dbReference type="InterPro" id="IPR040707">
    <property type="entry name" value="FGAR-AT_N"/>
</dbReference>
<dbReference type="InterPro" id="IPR055181">
    <property type="entry name" value="FGAR-AT_PurM_N-like"/>
</dbReference>
<dbReference type="InterPro" id="IPR010073">
    <property type="entry name" value="PurL_large"/>
</dbReference>
<dbReference type="InterPro" id="IPR041609">
    <property type="entry name" value="PurL_linker"/>
</dbReference>
<dbReference type="InterPro" id="IPR010918">
    <property type="entry name" value="PurM-like_C_dom"/>
</dbReference>
<dbReference type="InterPro" id="IPR036676">
    <property type="entry name" value="PurM-like_C_sf"/>
</dbReference>
<dbReference type="InterPro" id="IPR036921">
    <property type="entry name" value="PurM-like_N_sf"/>
</dbReference>
<dbReference type="InterPro" id="IPR036604">
    <property type="entry name" value="PurS-like_sf"/>
</dbReference>
<dbReference type="NCBIfam" id="TIGR01735">
    <property type="entry name" value="FGAM_synt"/>
    <property type="match status" value="1"/>
</dbReference>
<dbReference type="NCBIfam" id="NF003672">
    <property type="entry name" value="PRK05297.1"/>
    <property type="match status" value="1"/>
</dbReference>
<dbReference type="PANTHER" id="PTHR10099">
    <property type="entry name" value="PHOSPHORIBOSYLFORMYLGLYCINAMIDINE SYNTHASE"/>
    <property type="match status" value="1"/>
</dbReference>
<dbReference type="PANTHER" id="PTHR10099:SF1">
    <property type="entry name" value="PHOSPHORIBOSYLFORMYLGLYCINAMIDINE SYNTHASE"/>
    <property type="match status" value="1"/>
</dbReference>
<dbReference type="Pfam" id="PF02769">
    <property type="entry name" value="AIRS_C"/>
    <property type="match status" value="2"/>
</dbReference>
<dbReference type="Pfam" id="PF18072">
    <property type="entry name" value="FGAR-AT_linker"/>
    <property type="match status" value="1"/>
</dbReference>
<dbReference type="Pfam" id="PF18076">
    <property type="entry name" value="FGAR-AT_N"/>
    <property type="match status" value="1"/>
</dbReference>
<dbReference type="Pfam" id="PF22689">
    <property type="entry name" value="FGAR-AT_PurM_N-like"/>
    <property type="match status" value="1"/>
</dbReference>
<dbReference type="Pfam" id="PF13507">
    <property type="entry name" value="GATase_5"/>
    <property type="match status" value="1"/>
</dbReference>
<dbReference type="SMART" id="SM01211">
    <property type="entry name" value="GATase_5"/>
    <property type="match status" value="1"/>
</dbReference>
<dbReference type="SUPFAM" id="SSF52317">
    <property type="entry name" value="Class I glutamine amidotransferase-like"/>
    <property type="match status" value="1"/>
</dbReference>
<dbReference type="SUPFAM" id="SSF109736">
    <property type="entry name" value="FGAM synthase PurL, linker domain"/>
    <property type="match status" value="1"/>
</dbReference>
<dbReference type="SUPFAM" id="SSF56042">
    <property type="entry name" value="PurM C-terminal domain-like"/>
    <property type="match status" value="2"/>
</dbReference>
<dbReference type="SUPFAM" id="SSF55326">
    <property type="entry name" value="PurM N-terminal domain-like"/>
    <property type="match status" value="2"/>
</dbReference>
<dbReference type="SUPFAM" id="SSF82697">
    <property type="entry name" value="PurS-like"/>
    <property type="match status" value="1"/>
</dbReference>
<dbReference type="PROSITE" id="PS51273">
    <property type="entry name" value="GATASE_TYPE_1"/>
    <property type="match status" value="1"/>
</dbReference>
<comment type="function">
    <text evidence="1">Phosphoribosylformylglycinamidine synthase involved in the purines biosynthetic pathway. Catalyzes the ATP-dependent conversion of formylglycinamide ribonucleotide (FGAR) and glutamine to yield formylglycinamidine ribonucleotide (FGAM) and glutamate.</text>
</comment>
<comment type="catalytic activity">
    <reaction evidence="1">
        <text>N(2)-formyl-N(1)-(5-phospho-beta-D-ribosyl)glycinamide + L-glutamine + ATP + H2O = 2-formamido-N(1)-(5-O-phospho-beta-D-ribosyl)acetamidine + L-glutamate + ADP + phosphate + H(+)</text>
        <dbReference type="Rhea" id="RHEA:17129"/>
        <dbReference type="ChEBI" id="CHEBI:15377"/>
        <dbReference type="ChEBI" id="CHEBI:15378"/>
        <dbReference type="ChEBI" id="CHEBI:29985"/>
        <dbReference type="ChEBI" id="CHEBI:30616"/>
        <dbReference type="ChEBI" id="CHEBI:43474"/>
        <dbReference type="ChEBI" id="CHEBI:58359"/>
        <dbReference type="ChEBI" id="CHEBI:147286"/>
        <dbReference type="ChEBI" id="CHEBI:147287"/>
        <dbReference type="ChEBI" id="CHEBI:456216"/>
        <dbReference type="EC" id="6.3.5.3"/>
    </reaction>
</comment>
<comment type="pathway">
    <text evidence="1">Purine metabolism; IMP biosynthesis via de novo pathway; 5-amino-1-(5-phospho-D-ribosyl)imidazole from N(2)-formyl-N(1)-(5-phospho-D-ribosyl)glycinamide: step 1/2.</text>
</comment>
<comment type="subunit">
    <text evidence="1">Monomer.</text>
</comment>
<comment type="subcellular location">
    <subcellularLocation>
        <location evidence="1">Cytoplasm</location>
    </subcellularLocation>
</comment>
<comment type="similarity">
    <text evidence="1">In the N-terminal section; belongs to the FGAMS family.</text>
</comment>
<comment type="sequence caution" evidence="3">
    <conflict type="erroneous initiation">
        <sequence resource="EMBL-CDS" id="ABE08337"/>
    </conflict>
    <text>Extended N-terminus.</text>
</comment>
<organism>
    <name type="scientific">Escherichia coli (strain UTI89 / UPEC)</name>
    <dbReference type="NCBI Taxonomy" id="364106"/>
    <lineage>
        <taxon>Bacteria</taxon>
        <taxon>Pseudomonadati</taxon>
        <taxon>Pseudomonadota</taxon>
        <taxon>Gammaproteobacteria</taxon>
        <taxon>Enterobacterales</taxon>
        <taxon>Enterobacteriaceae</taxon>
        <taxon>Escherichia</taxon>
    </lineage>
</organism>